<proteinExistence type="inferred from homology"/>
<evidence type="ECO:0000255" key="1">
    <source>
        <dbReference type="HAMAP-Rule" id="MF_01357"/>
    </source>
</evidence>
<keyword id="KW-0150">Chloroplast</keyword>
<keyword id="KW-0472">Membrane</keyword>
<keyword id="KW-0520">NAD</keyword>
<keyword id="KW-0521">NADP</keyword>
<keyword id="KW-0934">Plastid</keyword>
<keyword id="KW-0618">Plastoquinone</keyword>
<keyword id="KW-0874">Quinone</keyword>
<keyword id="KW-1185">Reference proteome</keyword>
<keyword id="KW-0793">Thylakoid</keyword>
<keyword id="KW-1278">Translocase</keyword>
<keyword id="KW-0813">Transport</keyword>
<name>NDHJ_BRADI</name>
<dbReference type="EC" id="7.1.1.-" evidence="1"/>
<dbReference type="EMBL" id="EU325680">
    <property type="protein sequence ID" value="ACF08643.1"/>
    <property type="molecule type" value="Genomic_DNA"/>
</dbReference>
<dbReference type="RefSeq" id="YP_002000490.1">
    <property type="nucleotide sequence ID" value="NC_011032.1"/>
</dbReference>
<dbReference type="SMR" id="B3TN54"/>
<dbReference type="FunCoup" id="B3TN54">
    <property type="interactions" value="39"/>
</dbReference>
<dbReference type="STRING" id="15368.B3TN54"/>
<dbReference type="EnsemblPlants" id="KQJ84936">
    <property type="protein sequence ID" value="KQJ84936"/>
    <property type="gene ID" value="BRADI_5g23839v3"/>
</dbReference>
<dbReference type="EnsemblPlants" id="KQK18169">
    <property type="protein sequence ID" value="KQK18169"/>
    <property type="gene ID" value="BRADI_1g39199v3"/>
</dbReference>
<dbReference type="GeneID" id="6439868"/>
<dbReference type="Gramene" id="KQJ84936">
    <property type="protein sequence ID" value="KQJ84936"/>
    <property type="gene ID" value="BRADI_5g23839v3"/>
</dbReference>
<dbReference type="Gramene" id="KQK18169">
    <property type="protein sequence ID" value="KQK18169"/>
    <property type="gene ID" value="BRADI_1g39199v3"/>
</dbReference>
<dbReference type="KEGG" id="bdi:6439868"/>
<dbReference type="eggNOG" id="KOG1713">
    <property type="taxonomic scope" value="Eukaryota"/>
</dbReference>
<dbReference type="HOGENOM" id="CLU_042628_9_1_1"/>
<dbReference type="InParanoid" id="B3TN54"/>
<dbReference type="OMA" id="RSQCSYD"/>
<dbReference type="OrthoDB" id="580589at2759"/>
<dbReference type="Proteomes" id="UP000008810">
    <property type="component" value="Unplaced"/>
</dbReference>
<dbReference type="GO" id="GO:0009535">
    <property type="term" value="C:chloroplast thylakoid membrane"/>
    <property type="evidence" value="ECO:0007669"/>
    <property type="project" value="UniProtKB-SubCell"/>
</dbReference>
<dbReference type="GO" id="GO:0008137">
    <property type="term" value="F:NADH dehydrogenase (ubiquinone) activity"/>
    <property type="evidence" value="ECO:0007669"/>
    <property type="project" value="InterPro"/>
</dbReference>
<dbReference type="GO" id="GO:0048038">
    <property type="term" value="F:quinone binding"/>
    <property type="evidence" value="ECO:0007669"/>
    <property type="project" value="UniProtKB-KW"/>
</dbReference>
<dbReference type="GO" id="GO:0019684">
    <property type="term" value="P:photosynthesis, light reaction"/>
    <property type="evidence" value="ECO:0007669"/>
    <property type="project" value="UniProtKB-UniRule"/>
</dbReference>
<dbReference type="Gene3D" id="3.30.460.80">
    <property type="entry name" value="NADH:ubiquinone oxidoreductase, 30kDa subunit"/>
    <property type="match status" value="1"/>
</dbReference>
<dbReference type="HAMAP" id="MF_01357">
    <property type="entry name" value="NDH1_NuoC"/>
    <property type="match status" value="1"/>
</dbReference>
<dbReference type="InterPro" id="IPR010218">
    <property type="entry name" value="NADH_DH_suC"/>
</dbReference>
<dbReference type="InterPro" id="IPR037232">
    <property type="entry name" value="NADH_quin_OxRdtase_su_C/D-like"/>
</dbReference>
<dbReference type="InterPro" id="IPR001268">
    <property type="entry name" value="NADH_UbQ_OxRdtase_30kDa_su"/>
</dbReference>
<dbReference type="InterPro" id="IPR020396">
    <property type="entry name" value="NADH_UbQ_OxRdtase_CS"/>
</dbReference>
<dbReference type="NCBIfam" id="NF009141">
    <property type="entry name" value="PRK12494.1"/>
    <property type="match status" value="1"/>
</dbReference>
<dbReference type="PANTHER" id="PTHR10884:SF14">
    <property type="entry name" value="NADH DEHYDROGENASE [UBIQUINONE] IRON-SULFUR PROTEIN 3, MITOCHONDRIAL"/>
    <property type="match status" value="1"/>
</dbReference>
<dbReference type="PANTHER" id="PTHR10884">
    <property type="entry name" value="NADH DEHYDROGENASE UBIQUINONE IRON-SULFUR PROTEIN 3"/>
    <property type="match status" value="1"/>
</dbReference>
<dbReference type="Pfam" id="PF00329">
    <property type="entry name" value="Complex1_30kDa"/>
    <property type="match status" value="1"/>
</dbReference>
<dbReference type="SUPFAM" id="SSF143243">
    <property type="entry name" value="Nqo5-like"/>
    <property type="match status" value="1"/>
</dbReference>
<dbReference type="PROSITE" id="PS00542">
    <property type="entry name" value="COMPLEX1_30K"/>
    <property type="match status" value="1"/>
</dbReference>
<gene>
    <name evidence="1" type="primary">ndhJ</name>
</gene>
<accession>B3TN54</accession>
<sequence length="159" mass="18696">MQQGWLSNWLVKHKVVHRSLGFDHRGIETLQIKAGDWDSIAVILYVYGYNYLRSQCAYDVAPGGSLASVYHLTRIQYGIDNPEEVCIKVFAQKDNPRIPSVFWIWRSADFQERESYDMVGISYDNHPRLKRILMPESWVGWPLRKDYITPNFYEIQDAH</sequence>
<reference key="1">
    <citation type="journal article" date="2008" name="BMC Res. Notes">
        <title>The complete chloroplast genome sequence of Brachypodium distachyon: sequence comparison and phylogenetic analysis of eight grass plastomes.</title>
        <authorList>
            <person name="Bortiri E."/>
            <person name="Coleman-Derr D."/>
            <person name="Lazo G.R."/>
            <person name="Anderson O.D."/>
            <person name="Gu Y.Q."/>
        </authorList>
    </citation>
    <scope>NUCLEOTIDE SEQUENCE [LARGE SCALE GENOMIC DNA]</scope>
    <source>
        <strain>cv. Bd21</strain>
    </source>
</reference>
<comment type="function">
    <text evidence="1">NDH shuttles electrons from NAD(P)H:plastoquinone, via FMN and iron-sulfur (Fe-S) centers, to quinones in the photosynthetic chain and possibly in a chloroplast respiratory chain. The immediate electron acceptor for the enzyme in this species is believed to be plastoquinone. Couples the redox reaction to proton translocation, and thus conserves the redox energy in a proton gradient.</text>
</comment>
<comment type="catalytic activity">
    <reaction evidence="1">
        <text>a plastoquinone + NADH + (n+1) H(+)(in) = a plastoquinol + NAD(+) + n H(+)(out)</text>
        <dbReference type="Rhea" id="RHEA:42608"/>
        <dbReference type="Rhea" id="RHEA-COMP:9561"/>
        <dbReference type="Rhea" id="RHEA-COMP:9562"/>
        <dbReference type="ChEBI" id="CHEBI:15378"/>
        <dbReference type="ChEBI" id="CHEBI:17757"/>
        <dbReference type="ChEBI" id="CHEBI:57540"/>
        <dbReference type="ChEBI" id="CHEBI:57945"/>
        <dbReference type="ChEBI" id="CHEBI:62192"/>
    </reaction>
</comment>
<comment type="catalytic activity">
    <reaction evidence="1">
        <text>a plastoquinone + NADPH + (n+1) H(+)(in) = a plastoquinol + NADP(+) + n H(+)(out)</text>
        <dbReference type="Rhea" id="RHEA:42612"/>
        <dbReference type="Rhea" id="RHEA-COMP:9561"/>
        <dbReference type="Rhea" id="RHEA-COMP:9562"/>
        <dbReference type="ChEBI" id="CHEBI:15378"/>
        <dbReference type="ChEBI" id="CHEBI:17757"/>
        <dbReference type="ChEBI" id="CHEBI:57783"/>
        <dbReference type="ChEBI" id="CHEBI:58349"/>
        <dbReference type="ChEBI" id="CHEBI:62192"/>
    </reaction>
</comment>
<comment type="subunit">
    <text evidence="1">NDH is composed of at least 16 different subunits, 5 of which are encoded in the nucleus.</text>
</comment>
<comment type="subcellular location">
    <subcellularLocation>
        <location evidence="1">Plastid</location>
        <location evidence="1">Chloroplast thylakoid membrane</location>
        <topology evidence="1">Peripheral membrane protein</topology>
        <orientation evidence="1">Stromal side</orientation>
    </subcellularLocation>
</comment>
<comment type="similarity">
    <text evidence="1">Belongs to the complex I 30 kDa subunit family.</text>
</comment>
<geneLocation type="chloroplast"/>
<organism>
    <name type="scientific">Brachypodium distachyon</name>
    <name type="common">Purple false brome</name>
    <name type="synonym">Trachynia distachya</name>
    <dbReference type="NCBI Taxonomy" id="15368"/>
    <lineage>
        <taxon>Eukaryota</taxon>
        <taxon>Viridiplantae</taxon>
        <taxon>Streptophyta</taxon>
        <taxon>Embryophyta</taxon>
        <taxon>Tracheophyta</taxon>
        <taxon>Spermatophyta</taxon>
        <taxon>Magnoliopsida</taxon>
        <taxon>Liliopsida</taxon>
        <taxon>Poales</taxon>
        <taxon>Poaceae</taxon>
        <taxon>BOP clade</taxon>
        <taxon>Pooideae</taxon>
        <taxon>Stipodae</taxon>
        <taxon>Brachypodieae</taxon>
        <taxon>Brachypodium</taxon>
    </lineage>
</organism>
<protein>
    <recommendedName>
        <fullName evidence="1">NAD(P)H-quinone oxidoreductase subunit J, chloroplastic</fullName>
        <ecNumber evidence="1">7.1.1.-</ecNumber>
    </recommendedName>
    <alternativeName>
        <fullName>NAD(P)H dehydrogenase subunit J</fullName>
    </alternativeName>
    <alternativeName>
        <fullName evidence="1">NADH-plastoquinone oxidoreductase subunit J</fullName>
    </alternativeName>
</protein>
<feature type="chain" id="PRO_0000358245" description="NAD(P)H-quinone oxidoreductase subunit J, chloroplastic">
    <location>
        <begin position="1"/>
        <end position="159"/>
    </location>
</feature>